<sequence>MSSQEKLLKTVIRPHVSDKTYGLSDANSTIVFEVARFANKQDVKNAVEKLFEVKVESVNILNVKGKARRFGRVEGRTKAWKKAYVKLAEGHDINFVGAE</sequence>
<evidence type="ECO:0000255" key="1">
    <source>
        <dbReference type="HAMAP-Rule" id="MF_01369"/>
    </source>
</evidence>
<evidence type="ECO:0000305" key="2"/>
<reference key="1">
    <citation type="journal article" date="2009" name="PLoS ONE">
        <title>Complete genome sequence of Francisella tularensis subspecies holarctica FTNF002-00.</title>
        <authorList>
            <person name="Barabote R.D."/>
            <person name="Xie G."/>
            <person name="Brettin T.S."/>
            <person name="Hinrichs S.H."/>
            <person name="Fey P.D."/>
            <person name="Jay J.J."/>
            <person name="Engle J.L."/>
            <person name="Godbole S.D."/>
            <person name="Noronha J.M."/>
            <person name="Scheuermann R.H."/>
            <person name="Zhou L.W."/>
            <person name="Lion C."/>
            <person name="Dempsey M.P."/>
        </authorList>
    </citation>
    <scope>NUCLEOTIDE SEQUENCE [LARGE SCALE GENOMIC DNA]</scope>
    <source>
        <strain>FTNF002-00 / FTA</strain>
    </source>
</reference>
<name>RL23_FRATF</name>
<feature type="chain" id="PRO_1000068078" description="Large ribosomal subunit protein uL23">
    <location>
        <begin position="1"/>
        <end position="99"/>
    </location>
</feature>
<keyword id="KW-0687">Ribonucleoprotein</keyword>
<keyword id="KW-0689">Ribosomal protein</keyword>
<keyword id="KW-0694">RNA-binding</keyword>
<keyword id="KW-0699">rRNA-binding</keyword>
<protein>
    <recommendedName>
        <fullName evidence="1">Large ribosomal subunit protein uL23</fullName>
    </recommendedName>
    <alternativeName>
        <fullName evidence="2">50S ribosomal protein L23</fullName>
    </alternativeName>
</protein>
<comment type="function">
    <text evidence="1">One of the early assembly proteins it binds 23S rRNA. One of the proteins that surrounds the polypeptide exit tunnel on the outside of the ribosome. Forms the main docking site for trigger factor binding to the ribosome.</text>
</comment>
<comment type="subunit">
    <text evidence="1">Part of the 50S ribosomal subunit. Contacts protein L29, and trigger factor when it is bound to the ribosome.</text>
</comment>
<comment type="similarity">
    <text evidence="1">Belongs to the universal ribosomal protein uL23 family.</text>
</comment>
<gene>
    <name evidence="1" type="primary">rplW</name>
    <name type="ordered locus">FTA_0254</name>
</gene>
<proteinExistence type="inferred from homology"/>
<accession>A7N9S8</accession>
<organism>
    <name type="scientific">Francisella tularensis subsp. holarctica (strain FTNF002-00 / FTA)</name>
    <dbReference type="NCBI Taxonomy" id="458234"/>
    <lineage>
        <taxon>Bacteria</taxon>
        <taxon>Pseudomonadati</taxon>
        <taxon>Pseudomonadota</taxon>
        <taxon>Gammaproteobacteria</taxon>
        <taxon>Thiotrichales</taxon>
        <taxon>Francisellaceae</taxon>
        <taxon>Francisella</taxon>
    </lineage>
</organism>
<dbReference type="EMBL" id="CP000803">
    <property type="protein sequence ID" value="ABU60731.1"/>
    <property type="molecule type" value="Genomic_DNA"/>
</dbReference>
<dbReference type="RefSeq" id="WP_003027200.1">
    <property type="nucleotide sequence ID" value="NC_009749.1"/>
</dbReference>
<dbReference type="SMR" id="A7N9S8"/>
<dbReference type="GeneID" id="75264259"/>
<dbReference type="KEGG" id="fta:FTA_0254"/>
<dbReference type="HOGENOM" id="CLU_037562_3_1_6"/>
<dbReference type="GO" id="GO:1990904">
    <property type="term" value="C:ribonucleoprotein complex"/>
    <property type="evidence" value="ECO:0007669"/>
    <property type="project" value="UniProtKB-KW"/>
</dbReference>
<dbReference type="GO" id="GO:0005840">
    <property type="term" value="C:ribosome"/>
    <property type="evidence" value="ECO:0007669"/>
    <property type="project" value="UniProtKB-KW"/>
</dbReference>
<dbReference type="GO" id="GO:0019843">
    <property type="term" value="F:rRNA binding"/>
    <property type="evidence" value="ECO:0007669"/>
    <property type="project" value="UniProtKB-UniRule"/>
</dbReference>
<dbReference type="GO" id="GO:0003735">
    <property type="term" value="F:structural constituent of ribosome"/>
    <property type="evidence" value="ECO:0007669"/>
    <property type="project" value="InterPro"/>
</dbReference>
<dbReference type="GO" id="GO:0006412">
    <property type="term" value="P:translation"/>
    <property type="evidence" value="ECO:0007669"/>
    <property type="project" value="UniProtKB-UniRule"/>
</dbReference>
<dbReference type="FunFam" id="3.30.70.330:FF:000001">
    <property type="entry name" value="50S ribosomal protein L23"/>
    <property type="match status" value="1"/>
</dbReference>
<dbReference type="Gene3D" id="3.30.70.330">
    <property type="match status" value="1"/>
</dbReference>
<dbReference type="HAMAP" id="MF_01369_B">
    <property type="entry name" value="Ribosomal_uL23_B"/>
    <property type="match status" value="1"/>
</dbReference>
<dbReference type="InterPro" id="IPR012677">
    <property type="entry name" value="Nucleotide-bd_a/b_plait_sf"/>
</dbReference>
<dbReference type="InterPro" id="IPR013025">
    <property type="entry name" value="Ribosomal_uL23-like"/>
</dbReference>
<dbReference type="InterPro" id="IPR012678">
    <property type="entry name" value="Ribosomal_uL23/eL15/eS24_sf"/>
</dbReference>
<dbReference type="InterPro" id="IPR001014">
    <property type="entry name" value="Ribosomal_uL23_CS"/>
</dbReference>
<dbReference type="NCBIfam" id="NF004359">
    <property type="entry name" value="PRK05738.1-3"/>
    <property type="match status" value="1"/>
</dbReference>
<dbReference type="NCBIfam" id="NF004363">
    <property type="entry name" value="PRK05738.2-4"/>
    <property type="match status" value="1"/>
</dbReference>
<dbReference type="PANTHER" id="PTHR11620">
    <property type="entry name" value="60S RIBOSOMAL PROTEIN L23A"/>
    <property type="match status" value="1"/>
</dbReference>
<dbReference type="Pfam" id="PF00276">
    <property type="entry name" value="Ribosomal_L23"/>
    <property type="match status" value="1"/>
</dbReference>
<dbReference type="SUPFAM" id="SSF54189">
    <property type="entry name" value="Ribosomal proteins S24e, L23 and L15e"/>
    <property type="match status" value="1"/>
</dbReference>
<dbReference type="PROSITE" id="PS00050">
    <property type="entry name" value="RIBOSOMAL_L23"/>
    <property type="match status" value="1"/>
</dbReference>